<sequence length="158" mass="16393">MGSGSSRSSRTLRRRRSPESLPAGPGAAALEGGTRRRVPVAAAEVPGAAAEEAPGRDPSPVAPPDGRDETLRLLDELLAESAAWGPPEPAPRRPARLRPTAVAGSAVCAEQSTEGHPGSGNVSEAPGSGRKKPERPAAISYDHSEEGLMASIEREYCR</sequence>
<protein>
    <recommendedName>
        <fullName>Cystin-1</fullName>
    </recommendedName>
    <alternativeName>
        <fullName>Cilia-associated protein</fullName>
    </alternativeName>
</protein>
<comment type="subunit">
    <text evidence="4">Interacts (when myristoylated) with UNC119 and UNC119B; interaction is required for localization to cilium.</text>
</comment>
<comment type="subcellular location">
    <subcellularLocation>
        <location evidence="4">Cell projection</location>
        <location evidence="4">Cilium membrane</location>
        <topology evidence="4">Lipid-anchor</topology>
    </subcellularLocation>
    <subcellularLocation>
        <location evidence="4">Cytoplasm</location>
        <location evidence="4">Cytoskeleton</location>
        <location evidence="4">Cilium axoneme</location>
    </subcellularLocation>
    <text>Expression is enriched in the ciliary axoneme. Localization to cilium is mediated via interaction with UNC119 and UNC119B, which bind to the myristoyl moiety of the N-terminus.</text>
</comment>
<comment type="tissue specificity">
    <text>Expressed at high levels in the kidney and pancreas. Moderate expression seen in the skeletal muscle, liver and heart. A weak expression seen in the brain, lung, uterus, prostate, testis, small intestine and colon.</text>
</comment>
<comment type="developmental stage">
    <text evidence="3">Fetal kidney.</text>
</comment>
<evidence type="ECO:0000250" key="1"/>
<evidence type="ECO:0000256" key="2">
    <source>
        <dbReference type="SAM" id="MobiDB-lite"/>
    </source>
</evidence>
<evidence type="ECO:0000269" key="3">
    <source>
    </source>
</evidence>
<evidence type="ECO:0000269" key="4">
    <source>
    </source>
</evidence>
<keyword id="KW-1003">Cell membrane</keyword>
<keyword id="KW-0966">Cell projection</keyword>
<keyword id="KW-0969">Cilium</keyword>
<keyword id="KW-0963">Cytoplasm</keyword>
<keyword id="KW-0206">Cytoskeleton</keyword>
<keyword id="KW-0449">Lipoprotein</keyword>
<keyword id="KW-0472">Membrane</keyword>
<keyword id="KW-0519">Myristate</keyword>
<keyword id="KW-1267">Proteomics identification</keyword>
<keyword id="KW-1185">Reference proteome</keyword>
<organism>
    <name type="scientific">Homo sapiens</name>
    <name type="common">Human</name>
    <dbReference type="NCBI Taxonomy" id="9606"/>
    <lineage>
        <taxon>Eukaryota</taxon>
        <taxon>Metazoa</taxon>
        <taxon>Chordata</taxon>
        <taxon>Craniata</taxon>
        <taxon>Vertebrata</taxon>
        <taxon>Euteleostomi</taxon>
        <taxon>Mammalia</taxon>
        <taxon>Eutheria</taxon>
        <taxon>Euarchontoglires</taxon>
        <taxon>Primates</taxon>
        <taxon>Haplorrhini</taxon>
        <taxon>Catarrhini</taxon>
        <taxon>Hominidae</taxon>
        <taxon>Homo</taxon>
    </lineage>
</organism>
<dbReference type="EMBL" id="AF544983">
    <property type="protein sequence ID" value="AAQ11748.1"/>
    <property type="molecule type" value="mRNA"/>
</dbReference>
<dbReference type="CCDS" id="CCDS33145.1"/>
<dbReference type="RefSeq" id="NP_001032237.1">
    <property type="nucleotide sequence ID" value="NM_001037160.3"/>
</dbReference>
<dbReference type="BioGRID" id="128176">
    <property type="interactions" value="26"/>
</dbReference>
<dbReference type="FunCoup" id="Q717R9">
    <property type="interactions" value="2"/>
</dbReference>
<dbReference type="IntAct" id="Q717R9">
    <property type="interactions" value="22"/>
</dbReference>
<dbReference type="STRING" id="9606.ENSP00000371234"/>
<dbReference type="GlyGen" id="Q717R9">
    <property type="glycosylation" value="1 site"/>
</dbReference>
<dbReference type="iPTMnet" id="Q717R9"/>
<dbReference type="PhosphoSitePlus" id="Q717R9"/>
<dbReference type="BioMuta" id="CYS1"/>
<dbReference type="jPOST" id="Q717R9"/>
<dbReference type="MassIVE" id="Q717R9"/>
<dbReference type="PaxDb" id="9606-ENSP00000371234"/>
<dbReference type="PeptideAtlas" id="Q717R9"/>
<dbReference type="ProteomicsDB" id="68591"/>
<dbReference type="Antibodypedia" id="68061">
    <property type="antibodies" value="7 antibodies from 6 providers"/>
</dbReference>
<dbReference type="DNASU" id="192668"/>
<dbReference type="Ensembl" id="ENST00000381813.5">
    <property type="protein sequence ID" value="ENSP00000371234.4"/>
    <property type="gene ID" value="ENSG00000205795.5"/>
</dbReference>
<dbReference type="GeneID" id="192668"/>
<dbReference type="KEGG" id="hsa:192668"/>
<dbReference type="MANE-Select" id="ENST00000381813.5">
    <property type="protein sequence ID" value="ENSP00000371234.4"/>
    <property type="RefSeq nucleotide sequence ID" value="NM_001037160.3"/>
    <property type="RefSeq protein sequence ID" value="NP_001032237.1"/>
</dbReference>
<dbReference type="UCSC" id="uc002rag.3">
    <property type="organism name" value="human"/>
</dbReference>
<dbReference type="AGR" id="HGNC:18525"/>
<dbReference type="CTD" id="192668"/>
<dbReference type="DisGeNET" id="192668"/>
<dbReference type="GeneCards" id="CYS1"/>
<dbReference type="HGNC" id="HGNC:18525">
    <property type="gene designation" value="CYS1"/>
</dbReference>
<dbReference type="HPA" id="ENSG00000205795">
    <property type="expression patterns" value="Tissue enriched (kidney)"/>
</dbReference>
<dbReference type="MalaCards" id="CYS1"/>
<dbReference type="MIM" id="618713">
    <property type="type" value="gene"/>
</dbReference>
<dbReference type="neXtProt" id="NX_Q717R9"/>
<dbReference type="OpenTargets" id="ENSG00000205795"/>
<dbReference type="PharmGKB" id="PA38343"/>
<dbReference type="VEuPathDB" id="HostDB:ENSG00000205795"/>
<dbReference type="eggNOG" id="ENOG502T1UF">
    <property type="taxonomic scope" value="Eukaryota"/>
</dbReference>
<dbReference type="GeneTree" id="ENSGT00390000016845"/>
<dbReference type="HOGENOM" id="CLU_149422_0_0_1"/>
<dbReference type="InParanoid" id="Q717R9"/>
<dbReference type="OMA" id="CAEQSTE"/>
<dbReference type="OrthoDB" id="9450735at2759"/>
<dbReference type="PAN-GO" id="Q717R9">
    <property type="GO annotations" value="0 GO annotations based on evolutionary models"/>
</dbReference>
<dbReference type="PhylomeDB" id="Q717R9"/>
<dbReference type="PathwayCommons" id="Q717R9"/>
<dbReference type="Reactome" id="R-HSA-5624138">
    <property type="pathway name" value="Trafficking of myristoylated proteins to the cilium"/>
</dbReference>
<dbReference type="SignaLink" id="Q717R9"/>
<dbReference type="BioGRID-ORCS" id="192668">
    <property type="hits" value="125 hits in 1132 CRISPR screens"/>
</dbReference>
<dbReference type="GenomeRNAi" id="192668"/>
<dbReference type="Pharos" id="Q717R9">
    <property type="development level" value="Tdark"/>
</dbReference>
<dbReference type="PRO" id="PR:Q717R9"/>
<dbReference type="Proteomes" id="UP000005640">
    <property type="component" value="Chromosome 2"/>
</dbReference>
<dbReference type="RNAct" id="Q717R9">
    <property type="molecule type" value="protein"/>
</dbReference>
<dbReference type="Bgee" id="ENSG00000205795">
    <property type="expression patterns" value="Expressed in kidney epithelium and 119 other cell types or tissues"/>
</dbReference>
<dbReference type="GO" id="GO:0060170">
    <property type="term" value="C:ciliary membrane"/>
    <property type="evidence" value="ECO:0007669"/>
    <property type="project" value="UniProtKB-SubCell"/>
</dbReference>
<dbReference type="GO" id="GO:0005929">
    <property type="term" value="C:cilium"/>
    <property type="evidence" value="ECO:0000304"/>
    <property type="project" value="Reactome"/>
</dbReference>
<dbReference type="GO" id="GO:0005856">
    <property type="term" value="C:cytoskeleton"/>
    <property type="evidence" value="ECO:0007669"/>
    <property type="project" value="UniProtKB-KW"/>
</dbReference>
<dbReference type="GO" id="GO:0005829">
    <property type="term" value="C:cytosol"/>
    <property type="evidence" value="ECO:0000304"/>
    <property type="project" value="Reactome"/>
</dbReference>
<proteinExistence type="evidence at protein level"/>
<feature type="initiator methionine" description="Removed">
    <location>
        <position position="1"/>
    </location>
</feature>
<feature type="chain" id="PRO_0000261177" description="Cystin-1">
    <location>
        <begin position="2"/>
        <end position="158"/>
    </location>
</feature>
<feature type="region of interest" description="Disordered" evidence="2">
    <location>
        <begin position="1"/>
        <end position="146"/>
    </location>
</feature>
<feature type="short sequence motif" description="Ciliary targeting motif" evidence="1">
    <location>
        <begin position="29"/>
        <end position="33"/>
    </location>
</feature>
<feature type="compositionally biased region" description="Low complexity" evidence="2">
    <location>
        <begin position="19"/>
        <end position="32"/>
    </location>
</feature>
<feature type="compositionally biased region" description="Low complexity" evidence="2">
    <location>
        <begin position="39"/>
        <end position="52"/>
    </location>
</feature>
<feature type="compositionally biased region" description="Basic and acidic residues" evidence="2">
    <location>
        <begin position="65"/>
        <end position="75"/>
    </location>
</feature>
<feature type="lipid moiety-binding region" description="N-myristoyl glycine" evidence="4">
    <location>
        <position position="2"/>
    </location>
</feature>
<gene>
    <name type="primary">CYS1</name>
</gene>
<name>CYS1_HUMAN</name>
<reference key="1">
    <citation type="journal article" date="2003" name="Pediatr. Nephrol.">
        <title>Identification of the human CYS1 gene and candidate gene analysis in Boichis disease.</title>
        <authorList>
            <person name="Fliegauf M."/>
            <person name="Frohlich C."/>
            <person name="Horvath J."/>
            <person name="Olbrich H."/>
            <person name="Hildebrandt F."/>
            <person name="Omran H."/>
        </authorList>
    </citation>
    <scope>NUCLEOTIDE SEQUENCE [MRNA]</scope>
    <source>
        <tissue>Testis</tissue>
    </source>
</reference>
<reference key="2">
    <citation type="journal article" date="2002" name="J. Clin. Invest.">
        <title>Cystin, a novel cilia-associated protein, is disrupted in the cpk mouse model of polycystic kidney disease.</title>
        <authorList>
            <person name="Hou X."/>
            <person name="Mrug M."/>
            <person name="Yoder B.K."/>
            <person name="Lefkowitz E.J."/>
            <person name="Kremmidiotis G."/>
            <person name="D'Eustachio P."/>
            <person name="Beier D.R."/>
            <person name="Guay-Woodford L.M."/>
        </authorList>
    </citation>
    <scope>DEVELOPMENTAL STAGE</scope>
</reference>
<reference key="3">
    <citation type="journal article" date="2011" name="Genes Dev.">
        <title>An ARL3-UNC119-RP2 GTPase cycle targets myristoylated NPHP3 to the primary cilium.</title>
        <authorList>
            <person name="Wright K.J."/>
            <person name="Baye L.M."/>
            <person name="Olivier-Mason A."/>
            <person name="Mukhopadhyay S."/>
            <person name="Sang L."/>
            <person name="Kwong M."/>
            <person name="Wang W."/>
            <person name="Pretorius P.R."/>
            <person name="Sheffield V.C."/>
            <person name="Sengupta P."/>
            <person name="Slusarski D.C."/>
            <person name="Jackson P.K."/>
        </authorList>
    </citation>
    <scope>MYRISTOYLATION AT GLY-2</scope>
    <scope>INTERACTION WITH UNC119 AND UNC119B</scope>
    <scope>SUBCELLULAR LOCATION</scope>
</reference>
<accession>Q717R9</accession>